<gene>
    <name evidence="1" type="primary">hemA</name>
    <name type="ordered locus">RHA1_ro02053</name>
</gene>
<sequence>MSVLLVGVSHRTAPVPVLERVAVTDTDRPKLTDKLLASSHISEAMIVSTCNRVEIYAVVDAFHGALAEVGELLADHSGLDLTDLHRHAYVRYSEAAAEHLFAVASGLDSMVIGEQQILGQIRTAYASSDAQQAAGRTLHELAQQALRVGKRVHSETGIDSAGASVVSVALDRAAGIVGDGGLTGRTAVVVGAGSMGGLSVAHLTRAGIGRIVVVNRTKERAEHLADTARANGVEAEALELSELPAAMAQADVLVTCTGAVGAVVTLADTHRALAQPGRDAERPLVICDLGLPRDVEPAVSGLPGVTVLDMESLQRDPAAGAAASDADAARTIVAAELANYLAGQRLAEVTPTVTALRQRAADVVEAELMRLDSRLPGLDDPERDEVARTVRRVVDKLLHAPTVRVKQLASAPGGDSYAAALRELFELSPGSVEAVAKPTDLGGATDLSAIDITDGFIAGQDPRLRRFVTDDNHGKESQA</sequence>
<evidence type="ECO:0000255" key="1">
    <source>
        <dbReference type="HAMAP-Rule" id="MF_00087"/>
    </source>
</evidence>
<reference key="1">
    <citation type="journal article" date="2006" name="Proc. Natl. Acad. Sci. U.S.A.">
        <title>The complete genome of Rhodococcus sp. RHA1 provides insights into a catabolic powerhouse.</title>
        <authorList>
            <person name="McLeod M.P."/>
            <person name="Warren R.L."/>
            <person name="Hsiao W.W.L."/>
            <person name="Araki N."/>
            <person name="Myhre M."/>
            <person name="Fernandes C."/>
            <person name="Miyazawa D."/>
            <person name="Wong W."/>
            <person name="Lillquist A.L."/>
            <person name="Wang D."/>
            <person name="Dosanjh M."/>
            <person name="Hara H."/>
            <person name="Petrescu A."/>
            <person name="Morin R.D."/>
            <person name="Yang G."/>
            <person name="Stott J.M."/>
            <person name="Schein J.E."/>
            <person name="Shin H."/>
            <person name="Smailus D."/>
            <person name="Siddiqui A.S."/>
            <person name="Marra M.A."/>
            <person name="Jones S.J.M."/>
            <person name="Holt R."/>
            <person name="Brinkman F.S.L."/>
            <person name="Miyauchi K."/>
            <person name="Fukuda M."/>
            <person name="Davies J.E."/>
            <person name="Mohn W.W."/>
            <person name="Eltis L.D."/>
        </authorList>
    </citation>
    <scope>NUCLEOTIDE SEQUENCE [LARGE SCALE GENOMIC DNA]</scope>
    <source>
        <strain>RHA1</strain>
    </source>
</reference>
<comment type="function">
    <text evidence="1">Catalyzes the NADPH-dependent reduction of glutamyl-tRNA(Glu) to glutamate 1-semialdehyde (GSA).</text>
</comment>
<comment type="catalytic activity">
    <reaction evidence="1">
        <text>(S)-4-amino-5-oxopentanoate + tRNA(Glu) + NADP(+) = L-glutamyl-tRNA(Glu) + NADPH + H(+)</text>
        <dbReference type="Rhea" id="RHEA:12344"/>
        <dbReference type="Rhea" id="RHEA-COMP:9663"/>
        <dbReference type="Rhea" id="RHEA-COMP:9680"/>
        <dbReference type="ChEBI" id="CHEBI:15378"/>
        <dbReference type="ChEBI" id="CHEBI:57501"/>
        <dbReference type="ChEBI" id="CHEBI:57783"/>
        <dbReference type="ChEBI" id="CHEBI:58349"/>
        <dbReference type="ChEBI" id="CHEBI:78442"/>
        <dbReference type="ChEBI" id="CHEBI:78520"/>
        <dbReference type="EC" id="1.2.1.70"/>
    </reaction>
</comment>
<comment type="pathway">
    <text evidence="1">Porphyrin-containing compound metabolism; protoporphyrin-IX biosynthesis; 5-aminolevulinate from L-glutamyl-tRNA(Glu): step 1/2.</text>
</comment>
<comment type="subunit">
    <text evidence="1">Homodimer.</text>
</comment>
<comment type="domain">
    <text evidence="1">Possesses an unusual extended V-shaped dimeric structure with each monomer consisting of three distinct domains arranged along a curved 'spinal' alpha-helix. The N-terminal catalytic domain specifically recognizes the glutamate moiety of the substrate. The second domain is the NADPH-binding domain, and the third C-terminal domain is responsible for dimerization.</text>
</comment>
<comment type="miscellaneous">
    <text evidence="1">During catalysis, the active site Cys acts as a nucleophile attacking the alpha-carbonyl group of tRNA-bound glutamate with the formation of a thioester intermediate between enzyme and glutamate, and the concomitant release of tRNA(Glu). The thioester intermediate is finally reduced by direct hydride transfer from NADPH, to form the product GSA.</text>
</comment>
<comment type="similarity">
    <text evidence="1">Belongs to the glutamyl-tRNA reductase family.</text>
</comment>
<proteinExistence type="inferred from homology"/>
<accession>Q0SF26</accession>
<keyword id="KW-0521">NADP</keyword>
<keyword id="KW-0560">Oxidoreductase</keyword>
<keyword id="KW-0627">Porphyrin biosynthesis</keyword>
<name>HEM1_RHOJR</name>
<feature type="chain" id="PRO_0000335065" description="Glutamyl-tRNA reductase">
    <location>
        <begin position="1"/>
        <end position="479"/>
    </location>
</feature>
<feature type="active site" description="Nucleophile" evidence="1">
    <location>
        <position position="50"/>
    </location>
</feature>
<feature type="binding site" evidence="1">
    <location>
        <begin position="49"/>
        <end position="52"/>
    </location>
    <ligand>
        <name>substrate</name>
    </ligand>
</feature>
<feature type="binding site" evidence="1">
    <location>
        <position position="109"/>
    </location>
    <ligand>
        <name>substrate</name>
    </ligand>
</feature>
<feature type="binding site" evidence="1">
    <location>
        <begin position="114"/>
        <end position="116"/>
    </location>
    <ligand>
        <name>substrate</name>
    </ligand>
</feature>
<feature type="binding site" evidence="1">
    <location>
        <position position="120"/>
    </location>
    <ligand>
        <name>substrate</name>
    </ligand>
</feature>
<feature type="binding site" evidence="1">
    <location>
        <begin position="191"/>
        <end position="196"/>
    </location>
    <ligand>
        <name>NADP(+)</name>
        <dbReference type="ChEBI" id="CHEBI:58349"/>
    </ligand>
</feature>
<feature type="site" description="Important for activity" evidence="1">
    <location>
        <position position="99"/>
    </location>
</feature>
<protein>
    <recommendedName>
        <fullName evidence="1">Glutamyl-tRNA reductase</fullName>
        <shortName evidence="1">GluTR</shortName>
        <ecNumber evidence="1">1.2.1.70</ecNumber>
    </recommendedName>
</protein>
<dbReference type="EC" id="1.2.1.70" evidence="1"/>
<dbReference type="EMBL" id="CP000431">
    <property type="protein sequence ID" value="ABG93860.1"/>
    <property type="molecule type" value="Genomic_DNA"/>
</dbReference>
<dbReference type="RefSeq" id="WP_011594902.1">
    <property type="nucleotide sequence ID" value="NC_008268.1"/>
</dbReference>
<dbReference type="SMR" id="Q0SF26"/>
<dbReference type="KEGG" id="rha:RHA1_ro02053"/>
<dbReference type="PATRIC" id="fig|101510.16.peg.2078"/>
<dbReference type="eggNOG" id="COG0373">
    <property type="taxonomic scope" value="Bacteria"/>
</dbReference>
<dbReference type="HOGENOM" id="CLU_035113_4_0_11"/>
<dbReference type="OrthoDB" id="110209at2"/>
<dbReference type="UniPathway" id="UPA00251">
    <property type="reaction ID" value="UER00316"/>
</dbReference>
<dbReference type="Proteomes" id="UP000008710">
    <property type="component" value="Chromosome"/>
</dbReference>
<dbReference type="GO" id="GO:0008883">
    <property type="term" value="F:glutamyl-tRNA reductase activity"/>
    <property type="evidence" value="ECO:0007669"/>
    <property type="project" value="UniProtKB-UniRule"/>
</dbReference>
<dbReference type="GO" id="GO:0050661">
    <property type="term" value="F:NADP binding"/>
    <property type="evidence" value="ECO:0007669"/>
    <property type="project" value="InterPro"/>
</dbReference>
<dbReference type="GO" id="GO:0019353">
    <property type="term" value="P:protoporphyrinogen IX biosynthetic process from glutamate"/>
    <property type="evidence" value="ECO:0007669"/>
    <property type="project" value="TreeGrafter"/>
</dbReference>
<dbReference type="CDD" id="cd05213">
    <property type="entry name" value="NAD_bind_Glutamyl_tRNA_reduct"/>
    <property type="match status" value="1"/>
</dbReference>
<dbReference type="FunFam" id="3.30.460.30:FF:000001">
    <property type="entry name" value="Glutamyl-tRNA reductase"/>
    <property type="match status" value="1"/>
</dbReference>
<dbReference type="Gene3D" id="3.30.460.30">
    <property type="entry name" value="Glutamyl-tRNA reductase, N-terminal domain"/>
    <property type="match status" value="1"/>
</dbReference>
<dbReference type="Gene3D" id="3.40.50.720">
    <property type="entry name" value="NAD(P)-binding Rossmann-like Domain"/>
    <property type="match status" value="1"/>
</dbReference>
<dbReference type="HAMAP" id="MF_00087">
    <property type="entry name" value="Glu_tRNA_reductase"/>
    <property type="match status" value="1"/>
</dbReference>
<dbReference type="InterPro" id="IPR000343">
    <property type="entry name" value="4pyrrol_synth_GluRdtase"/>
</dbReference>
<dbReference type="InterPro" id="IPR015896">
    <property type="entry name" value="4pyrrol_synth_GluRdtase_dimer"/>
</dbReference>
<dbReference type="InterPro" id="IPR015895">
    <property type="entry name" value="4pyrrol_synth_GluRdtase_N"/>
</dbReference>
<dbReference type="InterPro" id="IPR018214">
    <property type="entry name" value="GluRdtase_CS"/>
</dbReference>
<dbReference type="InterPro" id="IPR036453">
    <property type="entry name" value="GluRdtase_dimer_dom_sf"/>
</dbReference>
<dbReference type="InterPro" id="IPR036343">
    <property type="entry name" value="GluRdtase_N_sf"/>
</dbReference>
<dbReference type="InterPro" id="IPR036291">
    <property type="entry name" value="NAD(P)-bd_dom_sf"/>
</dbReference>
<dbReference type="InterPro" id="IPR006151">
    <property type="entry name" value="Shikm_DH/Glu-tRNA_Rdtase"/>
</dbReference>
<dbReference type="NCBIfam" id="TIGR01035">
    <property type="entry name" value="hemA"/>
    <property type="match status" value="1"/>
</dbReference>
<dbReference type="NCBIfam" id="NF000744">
    <property type="entry name" value="PRK00045.1-3"/>
    <property type="match status" value="1"/>
</dbReference>
<dbReference type="PANTHER" id="PTHR43013">
    <property type="entry name" value="GLUTAMYL-TRNA REDUCTASE"/>
    <property type="match status" value="1"/>
</dbReference>
<dbReference type="PANTHER" id="PTHR43013:SF1">
    <property type="entry name" value="GLUTAMYL-TRNA REDUCTASE"/>
    <property type="match status" value="1"/>
</dbReference>
<dbReference type="Pfam" id="PF00745">
    <property type="entry name" value="GlutR_dimer"/>
    <property type="match status" value="1"/>
</dbReference>
<dbReference type="Pfam" id="PF05201">
    <property type="entry name" value="GlutR_N"/>
    <property type="match status" value="1"/>
</dbReference>
<dbReference type="Pfam" id="PF01488">
    <property type="entry name" value="Shikimate_DH"/>
    <property type="match status" value="1"/>
</dbReference>
<dbReference type="PIRSF" id="PIRSF000445">
    <property type="entry name" value="4pyrrol_synth_GluRdtase"/>
    <property type="match status" value="1"/>
</dbReference>
<dbReference type="SUPFAM" id="SSF69742">
    <property type="entry name" value="Glutamyl tRNA-reductase catalytic, N-terminal domain"/>
    <property type="match status" value="1"/>
</dbReference>
<dbReference type="SUPFAM" id="SSF69075">
    <property type="entry name" value="Glutamyl tRNA-reductase dimerization domain"/>
    <property type="match status" value="1"/>
</dbReference>
<dbReference type="SUPFAM" id="SSF51735">
    <property type="entry name" value="NAD(P)-binding Rossmann-fold domains"/>
    <property type="match status" value="1"/>
</dbReference>
<dbReference type="PROSITE" id="PS00747">
    <property type="entry name" value="GLUTR"/>
    <property type="match status" value="1"/>
</dbReference>
<organism>
    <name type="scientific">Rhodococcus jostii (strain RHA1)</name>
    <dbReference type="NCBI Taxonomy" id="101510"/>
    <lineage>
        <taxon>Bacteria</taxon>
        <taxon>Bacillati</taxon>
        <taxon>Actinomycetota</taxon>
        <taxon>Actinomycetes</taxon>
        <taxon>Mycobacteriales</taxon>
        <taxon>Nocardiaceae</taxon>
        <taxon>Rhodococcus</taxon>
    </lineage>
</organism>